<keyword id="KW-0547">Nucleotide-binding</keyword>
<dbReference type="EMBL" id="CP001131">
    <property type="protein sequence ID" value="ACG71344.1"/>
    <property type="molecule type" value="Genomic_DNA"/>
</dbReference>
<dbReference type="RefSeq" id="WP_012524180.1">
    <property type="nucleotide sequence ID" value="NC_011145.1"/>
</dbReference>
<dbReference type="SMR" id="B4UKQ3"/>
<dbReference type="KEGG" id="ank:AnaeK_0101"/>
<dbReference type="HOGENOM" id="CLU_099839_1_0_7"/>
<dbReference type="OrthoDB" id="9801447at2"/>
<dbReference type="Proteomes" id="UP000001871">
    <property type="component" value="Chromosome"/>
</dbReference>
<dbReference type="GO" id="GO:0005829">
    <property type="term" value="C:cytosol"/>
    <property type="evidence" value="ECO:0007669"/>
    <property type="project" value="TreeGrafter"/>
</dbReference>
<dbReference type="GO" id="GO:0000166">
    <property type="term" value="F:nucleotide binding"/>
    <property type="evidence" value="ECO:0007669"/>
    <property type="project" value="TreeGrafter"/>
</dbReference>
<dbReference type="CDD" id="cd11740">
    <property type="entry name" value="YajQ_like"/>
    <property type="match status" value="1"/>
</dbReference>
<dbReference type="Gene3D" id="3.30.70.860">
    <property type="match status" value="1"/>
</dbReference>
<dbReference type="Gene3D" id="3.30.70.990">
    <property type="entry name" value="YajQ-like, domain 2"/>
    <property type="match status" value="1"/>
</dbReference>
<dbReference type="HAMAP" id="MF_00632">
    <property type="entry name" value="YajQ"/>
    <property type="match status" value="1"/>
</dbReference>
<dbReference type="InterPro" id="IPR007551">
    <property type="entry name" value="DUF520"/>
</dbReference>
<dbReference type="InterPro" id="IPR035571">
    <property type="entry name" value="UPF0234-like_C"/>
</dbReference>
<dbReference type="InterPro" id="IPR035570">
    <property type="entry name" value="UPF0234_N"/>
</dbReference>
<dbReference type="InterPro" id="IPR036183">
    <property type="entry name" value="YajQ-like_sf"/>
</dbReference>
<dbReference type="NCBIfam" id="NF003819">
    <property type="entry name" value="PRK05412.1"/>
    <property type="match status" value="1"/>
</dbReference>
<dbReference type="PANTHER" id="PTHR30476">
    <property type="entry name" value="UPF0234 PROTEIN YAJQ"/>
    <property type="match status" value="1"/>
</dbReference>
<dbReference type="PANTHER" id="PTHR30476:SF0">
    <property type="entry name" value="UPF0234 PROTEIN YAJQ"/>
    <property type="match status" value="1"/>
</dbReference>
<dbReference type="Pfam" id="PF04461">
    <property type="entry name" value="DUF520"/>
    <property type="match status" value="1"/>
</dbReference>
<dbReference type="SUPFAM" id="SSF89963">
    <property type="entry name" value="YajQ-like"/>
    <property type="match status" value="2"/>
</dbReference>
<feature type="chain" id="PRO_1000130597" description="Nucleotide-binding protein AnaeK_0101">
    <location>
        <begin position="1"/>
        <end position="162"/>
    </location>
</feature>
<gene>
    <name type="ordered locus">AnaeK_0101</name>
</gene>
<evidence type="ECO:0000255" key="1">
    <source>
        <dbReference type="HAMAP-Rule" id="MF_00632"/>
    </source>
</evidence>
<reference key="1">
    <citation type="submission" date="2008-08" db="EMBL/GenBank/DDBJ databases">
        <title>Complete sequence of Anaeromyxobacter sp. K.</title>
        <authorList>
            <consortium name="US DOE Joint Genome Institute"/>
            <person name="Lucas S."/>
            <person name="Copeland A."/>
            <person name="Lapidus A."/>
            <person name="Glavina del Rio T."/>
            <person name="Dalin E."/>
            <person name="Tice H."/>
            <person name="Bruce D."/>
            <person name="Goodwin L."/>
            <person name="Pitluck S."/>
            <person name="Saunders E."/>
            <person name="Brettin T."/>
            <person name="Detter J.C."/>
            <person name="Han C."/>
            <person name="Larimer F."/>
            <person name="Land M."/>
            <person name="Hauser L."/>
            <person name="Kyrpides N."/>
            <person name="Ovchinnikiva G."/>
            <person name="Beliaev A."/>
        </authorList>
    </citation>
    <scope>NUCLEOTIDE SEQUENCE [LARGE SCALE GENOMIC DNA]</scope>
    <source>
        <strain>K</strain>
    </source>
</reference>
<proteinExistence type="inferred from homology"/>
<organism>
    <name type="scientific">Anaeromyxobacter sp. (strain K)</name>
    <dbReference type="NCBI Taxonomy" id="447217"/>
    <lineage>
        <taxon>Bacteria</taxon>
        <taxon>Pseudomonadati</taxon>
        <taxon>Myxococcota</taxon>
        <taxon>Myxococcia</taxon>
        <taxon>Myxococcales</taxon>
        <taxon>Cystobacterineae</taxon>
        <taxon>Anaeromyxobacteraceae</taxon>
        <taxon>Anaeromyxobacter</taxon>
    </lineage>
</organism>
<sequence length="162" mass="17996">MPSFDVVSEVDLMEVENAFNQARKEIAQRFDFKGTHTELERDKEQNVLIRAGSEGRAEAALQVLMEKLAKRGVALESLDPQKLEPASGGHVRQLVKLKRGLKIEDARKIVAKVKESGIKVQAAIQGDAVRVTGKKRDDLQAAIHAIRAAAFPIPLQFQNFRD</sequence>
<comment type="function">
    <text evidence="1">Nucleotide-binding protein.</text>
</comment>
<comment type="similarity">
    <text evidence="1">Belongs to the YajQ family.</text>
</comment>
<name>Y101_ANASK</name>
<protein>
    <recommendedName>
        <fullName evidence="1">Nucleotide-binding protein AnaeK_0101</fullName>
    </recommendedName>
</protein>
<accession>B4UKQ3</accession>